<evidence type="ECO:0000255" key="1"/>
<evidence type="ECO:0000256" key="2">
    <source>
        <dbReference type="SAM" id="MobiDB-lite"/>
    </source>
</evidence>
<evidence type="ECO:0000269" key="3">
    <source>
    </source>
</evidence>
<evidence type="ECO:0000303" key="4">
    <source>
    </source>
</evidence>
<evidence type="ECO:0000303" key="5">
    <source>
    </source>
</evidence>
<evidence type="ECO:0000305" key="6"/>
<evidence type="ECO:0000305" key="7">
    <source>
    </source>
</evidence>
<comment type="subcellular location">
    <subcellularLocation>
        <location evidence="3">Secreted</location>
    </subcellularLocation>
    <text evidence="3">The mature toxins are clearly liberated from the multidomain precursors in the venom gland prior to venom expulsion and not by venom proteases upon secretion.</text>
</comment>
<comment type="tissue specificity">
    <text evidence="7">Expressed by the venom gland.</text>
</comment>
<comment type="similarity">
    <text evidence="6">Belongs to the scoloptoxin-08 family.</text>
</comment>
<sequence>MKTNCEFPLLCLLIVLVANVEGEVEDTGLKMVKRLWRNWEDPEQRQLLDQGTELEKQREKRLWRNWEDLELRQLLNEFAENQREKRLWRNWERRQVANEDDGEKAKELWRNWEDLKRRQVADLNDEQETQRDKRLWRNWEDNHATLRKRSADSLSRQKRLGKERGKE</sequence>
<name>TX85A_ETHRU</name>
<organism>
    <name type="scientific">Ethmostigmus rubripes</name>
    <name type="common">Giant centipede</name>
    <dbReference type="NCBI Taxonomy" id="62613"/>
    <lineage>
        <taxon>Eukaryota</taxon>
        <taxon>Metazoa</taxon>
        <taxon>Ecdysozoa</taxon>
        <taxon>Arthropoda</taxon>
        <taxon>Myriapoda</taxon>
        <taxon>Chilopoda</taxon>
        <taxon>Pleurostigmophora</taxon>
        <taxon>Scolopendromorpha</taxon>
        <taxon>Scolopendridae</taxon>
        <taxon>Ethmostigmus</taxon>
    </lineage>
</organism>
<keyword id="KW-0165">Cleavage on pair of basic residues</keyword>
<keyword id="KW-0903">Direct protein sequencing</keyword>
<keyword id="KW-0873">Pyrrolidone carboxylic acid</keyword>
<keyword id="KW-0677">Repeat</keyword>
<keyword id="KW-0964">Secreted</keyword>
<keyword id="KW-0732">Signal</keyword>
<keyword id="KW-0800">Toxin</keyword>
<feature type="signal peptide" evidence="1">
    <location>
        <begin position="1"/>
        <end position="22"/>
    </location>
</feature>
<feature type="propeptide" id="PRO_0000446728" evidence="7">
    <location>
        <begin position="23"/>
        <end position="94"/>
    </location>
</feature>
<feature type="peptide" id="PRO_5001524642" description="U-scoloptoxin-Er5.1a" evidence="3">
    <location>
        <begin position="95"/>
        <end position="111"/>
    </location>
</feature>
<feature type="propeptide" id="PRO_0000446729" evidence="7">
    <location>
        <begin position="112"/>
        <end position="118"/>
    </location>
</feature>
<feature type="peptide" id="PRO_0000446730" description="U-scoloptoxin-Er5.2a" evidence="3">
    <location>
        <begin position="119"/>
        <end position="138"/>
    </location>
</feature>
<feature type="propeptide" id="PRO_0000446731" evidence="7">
    <location>
        <begin position="139"/>
        <end position="167"/>
    </location>
</feature>
<feature type="repeat" description="RLWRNWE 1" evidence="7">
    <location>
        <begin position="34"/>
        <end position="40"/>
    </location>
</feature>
<feature type="repeat" description="RLWRNWE 2" evidence="7">
    <location>
        <begin position="61"/>
        <end position="67"/>
    </location>
</feature>
<feature type="repeat" description="RLWRNWE 3" evidence="7">
    <location>
        <begin position="86"/>
        <end position="92"/>
    </location>
</feature>
<feature type="repeat" description="RLWRNWE 4; approximate" evidence="7">
    <location>
        <begin position="107"/>
        <end position="113"/>
    </location>
</feature>
<feature type="repeat" description="RLWRNWE 5" evidence="7">
    <location>
        <begin position="134"/>
        <end position="140"/>
    </location>
</feature>
<feature type="region of interest" description="Disordered" evidence="2">
    <location>
        <begin position="147"/>
        <end position="167"/>
    </location>
</feature>
<feature type="modified residue" description="Pyrrolidone carboxylic acid" evidence="3">
    <location>
        <position position="95"/>
    </location>
</feature>
<feature type="modified residue" description="Pyrrolidone carboxylic acid" evidence="3">
    <location>
        <position position="119"/>
    </location>
</feature>
<protein>
    <recommendedName>
        <fullName evidence="5">U-scoloptoxin(08)-Er5a</fullName>
        <shortName evidence="5">U-SLPTX(08)-Er5a</shortName>
    </recommendedName>
    <component>
        <recommendedName>
            <fullName evidence="4">U-scoloptoxin-Er5.1a</fullName>
            <shortName evidence="4">U-SLPTX-Er5.1a</shortName>
        </recommendedName>
    </component>
    <component>
        <recommendedName>
            <fullName evidence="4">U-scoloptoxin-Er5.2a</fullName>
            <shortName evidence="4">U-SLPTX-Er5.2a</shortName>
        </recommendedName>
    </component>
</protein>
<accession>A0A023W0B6</accession>
<proteinExistence type="evidence at protein level"/>
<reference key="1">
    <citation type="journal article" date="2014" name="J. Proteomics">
        <title>Multifunctional warheads: diversification of the toxin arsenal of centipedes via novel multidomain transcripts.</title>
        <authorList>
            <person name="Undheim E.A."/>
            <person name="Sunagar K."/>
            <person name="Hamilton B.R."/>
            <person name="Jones A."/>
            <person name="Venter D.J."/>
            <person name="Fry B.G."/>
            <person name="King G.F."/>
        </authorList>
    </citation>
    <scope>NUCLEOTIDE SEQUENCE [MRNA]</scope>
    <scope>PROTEIN SEQUENCE OF 95-111 AND 119-138</scope>
    <scope>IDENTIFICATION BY MASS SPECTROMETRY</scope>
    <scope>PYROGLUTAMATE FORMATION AT GLN-95 AND GLN-119</scope>
    <scope>SUBCELLULAR LOCATION</scope>
    <source>
        <tissue>Venom</tissue>
        <tissue>Venom gland</tissue>
    </source>
</reference>
<reference key="2">
    <citation type="journal article" date="2014" name="Mol. Biol. Evol.">
        <title>Clawing through evolution: toxin diversification and convergence in the ancient lineage Chilopoda (centipedes).</title>
        <authorList>
            <person name="Undheim E.A."/>
            <person name="Jones A."/>
            <person name="Clauser K.R."/>
            <person name="Holland J.W."/>
            <person name="Pineda S.S."/>
            <person name="King G.F."/>
            <person name="Fry B.G."/>
        </authorList>
    </citation>
    <scope>NOMENCLATURE</scope>
</reference>
<dbReference type="EMBL" id="KF130755">
    <property type="protein sequence ID" value="AHY22606.1"/>
    <property type="molecule type" value="mRNA"/>
</dbReference>
<dbReference type="GO" id="GO:0005576">
    <property type="term" value="C:extracellular region"/>
    <property type="evidence" value="ECO:0007669"/>
    <property type="project" value="UniProtKB-SubCell"/>
</dbReference>
<dbReference type="GO" id="GO:0090729">
    <property type="term" value="F:toxin activity"/>
    <property type="evidence" value="ECO:0007669"/>
    <property type="project" value="UniProtKB-KW"/>
</dbReference>